<sequence>MMVYIMNAFDIKSTKMDVLSISLHTSDLFDLEDVLVKLGKKFQESGVVPFVLDVQEFDYPESLDLAALVSLFSRHGMQILGLKHSNERWAAVAMKYHLLFCLSHSENVKELGQVEVQKTEDGQKARKTVLITSPVRTGQQVYAEDGDLIVTGAVSQGAELIADGNMHIYAPMRGRALAGAKGDTSARIFIHSMQAELVSVAGIYRNFEQDLPDHLHKQPVQILLQDNRLVISAIGSE</sequence>
<reference key="1">
    <citation type="journal article" date="2001" name="Microbiology">
        <title>Deletion of the cell-division inhibitor MinC results in lysis of Neisseria gonorrhoeae.</title>
        <authorList>
            <person name="Ramirez-Arcos S."/>
            <person name="Szeto J."/>
            <person name="Beveridge T."/>
            <person name="Victor C."/>
            <person name="Francis F."/>
            <person name="Dillon J."/>
        </authorList>
    </citation>
    <scope>NUCLEOTIDE SEQUENCE [GENOMIC DNA]</scope>
</reference>
<reference key="2">
    <citation type="submission" date="2003-03" db="EMBL/GenBank/DDBJ databases">
        <title>The complete genome sequence of Neisseria gonorrhoeae.</title>
        <authorList>
            <person name="Lewis L.A."/>
            <person name="Gillaspy A.F."/>
            <person name="McLaughlin R.E."/>
            <person name="Gipson M."/>
            <person name="Ducey T.F."/>
            <person name="Ownbey T."/>
            <person name="Hartman K."/>
            <person name="Nydick C."/>
            <person name="Carson M.B."/>
            <person name="Vaughn J."/>
            <person name="Thomson C."/>
            <person name="Song L."/>
            <person name="Lin S."/>
            <person name="Yuan X."/>
            <person name="Najar F."/>
            <person name="Zhan M."/>
            <person name="Ren Q."/>
            <person name="Zhu H."/>
            <person name="Qi S."/>
            <person name="Kenton S.M."/>
            <person name="Lai H."/>
            <person name="White J.D."/>
            <person name="Clifton S."/>
            <person name="Roe B.A."/>
            <person name="Dyer D.W."/>
        </authorList>
    </citation>
    <scope>NUCLEOTIDE SEQUENCE [LARGE SCALE GENOMIC DNA]</scope>
    <source>
        <strain>ATCC 700825 / FA 1090</strain>
    </source>
</reference>
<evidence type="ECO:0000250" key="1"/>
<evidence type="ECO:0000305" key="2"/>
<organism>
    <name type="scientific">Neisseria gonorrhoeae (strain ATCC 700825 / FA 1090)</name>
    <dbReference type="NCBI Taxonomy" id="242231"/>
    <lineage>
        <taxon>Bacteria</taxon>
        <taxon>Pseudomonadati</taxon>
        <taxon>Pseudomonadota</taxon>
        <taxon>Betaproteobacteria</taxon>
        <taxon>Neisseriales</taxon>
        <taxon>Neisseriaceae</taxon>
        <taxon>Neisseria</taxon>
    </lineage>
</organism>
<protein>
    <recommendedName>
        <fullName>Probable septum site-determining protein MinC</fullName>
    </recommendedName>
</protein>
<gene>
    <name type="primary">minC</name>
    <name type="ordered locus">NGO_1816</name>
</gene>
<proteinExistence type="inferred from homology"/>
<comment type="function">
    <text evidence="1">Cell division inhibitor that blocks the formation of polar Z ring septums. Rapidly oscillates between the poles of the cell to destabilize FtsZ filaments that have formed before they mature into polar Z rings. Prevents FtsZ polymerization (By similarity).</text>
</comment>
<comment type="subunit">
    <text evidence="1">Interacts with MinD and FtsZ.</text>
</comment>
<comment type="similarity">
    <text evidence="2">Belongs to the MinC family.</text>
</comment>
<keyword id="KW-0131">Cell cycle</keyword>
<keyword id="KW-0132">Cell division</keyword>
<keyword id="KW-1185">Reference proteome</keyword>
<keyword id="KW-0717">Septation</keyword>
<name>MINC_NEIG1</name>
<feature type="chain" id="PRO_0000189043" description="Probable septum site-determining protein MinC">
    <location>
        <begin position="1"/>
        <end position="237"/>
    </location>
</feature>
<dbReference type="EMBL" id="AE004969">
    <property type="protein sequence ID" value="AAW90433.1"/>
    <property type="molecule type" value="Genomic_DNA"/>
</dbReference>
<dbReference type="RefSeq" id="WP_003700581.1">
    <property type="nucleotide sequence ID" value="NC_002946.2"/>
</dbReference>
<dbReference type="RefSeq" id="YP_208845.1">
    <property type="nucleotide sequence ID" value="NC_002946.2"/>
</dbReference>
<dbReference type="SMR" id="Q5F5V4"/>
<dbReference type="STRING" id="242231.NGO_1816"/>
<dbReference type="KEGG" id="ngo:NGO_1816"/>
<dbReference type="PATRIC" id="fig|242231.10.peg.2181"/>
<dbReference type="HOGENOM" id="CLU_067812_0_0_4"/>
<dbReference type="Proteomes" id="UP000000535">
    <property type="component" value="Chromosome"/>
</dbReference>
<dbReference type="GO" id="GO:0000902">
    <property type="term" value="P:cell morphogenesis"/>
    <property type="evidence" value="ECO:0007669"/>
    <property type="project" value="InterPro"/>
</dbReference>
<dbReference type="GO" id="GO:0000917">
    <property type="term" value="P:division septum assembly"/>
    <property type="evidence" value="ECO:0007669"/>
    <property type="project" value="UniProtKB-KW"/>
</dbReference>
<dbReference type="GO" id="GO:0051302">
    <property type="term" value="P:regulation of cell division"/>
    <property type="evidence" value="ECO:0007669"/>
    <property type="project" value="InterPro"/>
</dbReference>
<dbReference type="GO" id="GO:1901891">
    <property type="term" value="P:regulation of cell septum assembly"/>
    <property type="evidence" value="ECO:0007669"/>
    <property type="project" value="InterPro"/>
</dbReference>
<dbReference type="Gene3D" id="2.160.20.70">
    <property type="match status" value="1"/>
</dbReference>
<dbReference type="Gene3D" id="3.30.70.260">
    <property type="match status" value="1"/>
</dbReference>
<dbReference type="HAMAP" id="MF_00267">
    <property type="entry name" value="MinC"/>
    <property type="match status" value="1"/>
</dbReference>
<dbReference type="InterPro" id="IPR016098">
    <property type="entry name" value="CAP/MinC_C"/>
</dbReference>
<dbReference type="InterPro" id="IPR013033">
    <property type="entry name" value="MinC"/>
</dbReference>
<dbReference type="InterPro" id="IPR036145">
    <property type="entry name" value="MinC_C_sf"/>
</dbReference>
<dbReference type="InterPro" id="IPR007874">
    <property type="entry name" value="MinC_N"/>
</dbReference>
<dbReference type="InterPro" id="IPR005526">
    <property type="entry name" value="Septum_form_inhib_MinC_C"/>
</dbReference>
<dbReference type="NCBIfam" id="TIGR01222">
    <property type="entry name" value="minC"/>
    <property type="match status" value="1"/>
</dbReference>
<dbReference type="PANTHER" id="PTHR34108">
    <property type="entry name" value="SEPTUM SITE-DETERMINING PROTEIN MINC"/>
    <property type="match status" value="1"/>
</dbReference>
<dbReference type="PANTHER" id="PTHR34108:SF1">
    <property type="entry name" value="SEPTUM SITE-DETERMINING PROTEIN MINC"/>
    <property type="match status" value="1"/>
</dbReference>
<dbReference type="Pfam" id="PF03775">
    <property type="entry name" value="MinC_C"/>
    <property type="match status" value="1"/>
</dbReference>
<dbReference type="Pfam" id="PF05209">
    <property type="entry name" value="MinC_N"/>
    <property type="match status" value="1"/>
</dbReference>
<dbReference type="SUPFAM" id="SSF63848">
    <property type="entry name" value="Cell-division inhibitor MinC, C-terminal domain"/>
    <property type="match status" value="1"/>
</dbReference>
<accession>Q5F5V4</accession>